<keyword id="KW-0249">Electron transport</keyword>
<keyword id="KW-0325">Glycoprotein</keyword>
<keyword id="KW-0349">Heme</keyword>
<keyword id="KW-0408">Iron</keyword>
<keyword id="KW-0472">Membrane</keyword>
<keyword id="KW-0479">Metal-binding</keyword>
<keyword id="KW-0560">Oxidoreductase</keyword>
<keyword id="KW-1185">Reference proteome</keyword>
<keyword id="KW-0812">Transmembrane</keyword>
<keyword id="KW-1133">Transmembrane helix</keyword>
<keyword id="KW-0813">Transport</keyword>
<sequence length="591" mass="65660">MTAPGFTVSAFILLLHVSFVANYPSGKVTKSCGGMIPEHGHTPQSHPAHNISVSQKTFRPGDQIKVTLSGPPFKGFLLEARDAENLSGPPVGSFTLIDSHVSQLLTCEDVQGSAVSHRSPSKKTEIKVFWDAPSGAPNHITFLATVVEKYKIYWVKIPGPVISQPNVPPFTTPEATIAPMPTVPSVSHLTRSFNASDCGNKKFCIRSPLNCDPEKERACVLLSFTRDDQSVMVEMSGPSKGYLSVAFSHDRWMGDDDAYVCILEDQIVHIQPSHLTGRSHPIMDFGDPLEDMAWRLVDGVMQCSFRRNITLPGVKNRFDLNASYYIFVADGAAVDGRIHKHSQQPLITYEKYNVTGDPKNIGGSHSLLLLKVHGALMFVAWMTTVSVGVLIARFFKPVWSKALFGDAAWFQVHRTLMLTTSALTFIAFLLPFIYRGGWNWHAGYHPYLGFIVMVLAVLQLLLAAFRPPLHDPRRQMFNWTHWSMGTAARIIAVAAMFLGMDLPGLNLPGPWKTYAMIGFVAWHVGTEIILEIHAYRLSRKVEILDDDRIQILQSFTAAEAEGYVFKKVVLAIYVCGNLTFLTMFLSAINRL</sequence>
<reference key="1">
    <citation type="submission" date="2007-02" db="EMBL/GenBank/DDBJ databases">
        <authorList>
            <consortium name="NIH - Mammalian Gene Collection (MGC) project"/>
        </authorList>
    </citation>
    <scope>NUCLEOTIDE SEQUENCE [LARGE SCALE MRNA]</scope>
    <source>
        <strain>Hereford</strain>
        <tissue>Hypothalamus</tissue>
    </source>
</reference>
<name>FRRS1_BOVIN</name>
<proteinExistence type="evidence at transcript level"/>
<organism>
    <name type="scientific">Bos taurus</name>
    <name type="common">Bovine</name>
    <dbReference type="NCBI Taxonomy" id="9913"/>
    <lineage>
        <taxon>Eukaryota</taxon>
        <taxon>Metazoa</taxon>
        <taxon>Chordata</taxon>
        <taxon>Craniata</taxon>
        <taxon>Vertebrata</taxon>
        <taxon>Euteleostomi</taxon>
        <taxon>Mammalia</taxon>
        <taxon>Eutheria</taxon>
        <taxon>Laurasiatheria</taxon>
        <taxon>Artiodactyla</taxon>
        <taxon>Ruminantia</taxon>
        <taxon>Pecora</taxon>
        <taxon>Bovidae</taxon>
        <taxon>Bovinae</taxon>
        <taxon>Bos</taxon>
    </lineage>
</organism>
<evidence type="ECO:0000250" key="1">
    <source>
        <dbReference type="UniProtKB" id="Q53TN4"/>
    </source>
</evidence>
<evidence type="ECO:0000250" key="2">
    <source>
        <dbReference type="UniProtKB" id="Q8K385"/>
    </source>
</evidence>
<evidence type="ECO:0000255" key="3"/>
<evidence type="ECO:0000255" key="4">
    <source>
        <dbReference type="PROSITE-ProRule" id="PRU00242"/>
    </source>
</evidence>
<evidence type="ECO:0000255" key="5">
    <source>
        <dbReference type="PROSITE-ProRule" id="PRU00246"/>
    </source>
</evidence>
<evidence type="ECO:0000255" key="6">
    <source>
        <dbReference type="PROSITE-ProRule" id="PRU00363"/>
    </source>
</evidence>
<evidence type="ECO:0000305" key="7"/>
<gene>
    <name type="primary">FRRS1</name>
</gene>
<protein>
    <recommendedName>
        <fullName>Ferric-chelate reductase 1</fullName>
        <ecNumber>1.-.-.-</ecNumber>
    </recommendedName>
</protein>
<feature type="chain" id="PRO_0000314842" description="Ferric-chelate reductase 1">
    <location>
        <begin position="1"/>
        <end position="591"/>
    </location>
</feature>
<feature type="transmembrane region" description="Helical; Name=1" evidence="3">
    <location>
        <begin position="6"/>
        <end position="26"/>
    </location>
</feature>
<feature type="transmembrane region" description="Helical; Name=2" evidence="3">
    <location>
        <begin position="372"/>
        <end position="392"/>
    </location>
</feature>
<feature type="transmembrane region" description="Helical; Name=3" evidence="3">
    <location>
        <begin position="416"/>
        <end position="436"/>
    </location>
</feature>
<feature type="transmembrane region" description="Helical; Name=4" evidence="3">
    <location>
        <begin position="445"/>
        <end position="465"/>
    </location>
</feature>
<feature type="transmembrane region" description="Helical; Name=5" evidence="3">
    <location>
        <begin position="490"/>
        <end position="510"/>
    </location>
</feature>
<feature type="transmembrane region" description="Helical; Name=6" evidence="3">
    <location>
        <begin position="514"/>
        <end position="534"/>
    </location>
</feature>
<feature type="transmembrane region" description="Helical; Name=7" evidence="3">
    <location>
        <begin position="568"/>
        <end position="588"/>
    </location>
</feature>
<feature type="domain" description="Reelin" evidence="6">
    <location>
        <begin position="13"/>
        <end position="179"/>
    </location>
</feature>
<feature type="domain" description="DOMON" evidence="5">
    <location>
        <begin position="216"/>
        <end position="331"/>
    </location>
</feature>
<feature type="domain" description="Cytochrome b561" evidence="4">
    <location>
        <begin position="335"/>
        <end position="533"/>
    </location>
</feature>
<feature type="binding site" description="axial binding residue" evidence="1">
    <location>
        <position position="373"/>
    </location>
    <ligand>
        <name>heme b</name>
        <dbReference type="ChEBI" id="CHEBI:60344"/>
        <label>1</label>
    </ligand>
    <ligandPart>
        <name>Fe</name>
        <dbReference type="ChEBI" id="CHEBI:18248"/>
    </ligandPart>
</feature>
<feature type="binding site" description="axial binding residue" evidence="1">
    <location>
        <position position="413"/>
    </location>
    <ligand>
        <name>heme b</name>
        <dbReference type="ChEBI" id="CHEBI:60344"/>
        <label>2</label>
    </ligand>
    <ligandPart>
        <name>Fe</name>
        <dbReference type="ChEBI" id="CHEBI:18248"/>
    </ligandPart>
</feature>
<feature type="binding site" description="axial binding residue" evidence="1">
    <location>
        <position position="445"/>
    </location>
    <ligand>
        <name>heme b</name>
        <dbReference type="ChEBI" id="CHEBI:60344"/>
        <label>1</label>
    </ligand>
    <ligandPart>
        <name>Fe</name>
        <dbReference type="ChEBI" id="CHEBI:18248"/>
    </ligandPart>
</feature>
<feature type="binding site" description="axial binding residue" evidence="1">
    <location>
        <position position="481"/>
    </location>
    <ligand>
        <name>heme b</name>
        <dbReference type="ChEBI" id="CHEBI:60344"/>
        <label>2</label>
    </ligand>
    <ligandPart>
        <name>Fe</name>
        <dbReference type="ChEBI" id="CHEBI:18248"/>
    </ligandPart>
</feature>
<feature type="glycosylation site" description="N-linked (GlcNAc...) asparagine" evidence="3">
    <location>
        <position position="50"/>
    </location>
</feature>
<feature type="glycosylation site" description="N-linked (GlcNAc...) asparagine" evidence="3">
    <location>
        <position position="85"/>
    </location>
</feature>
<feature type="glycosylation site" description="N-linked (GlcNAc...) asparagine" evidence="3">
    <location>
        <position position="308"/>
    </location>
</feature>
<feature type="glycosylation site" description="N-linked (GlcNAc...) asparagine" evidence="3">
    <location>
        <position position="321"/>
    </location>
</feature>
<feature type="glycosylation site" description="N-linked (GlcNAc...) asparagine" evidence="3">
    <location>
        <position position="353"/>
    </location>
</feature>
<dbReference type="EC" id="1.-.-.-"/>
<dbReference type="EMBL" id="BC133504">
    <property type="protein sequence ID" value="AAI33505.1"/>
    <property type="molecule type" value="mRNA"/>
</dbReference>
<dbReference type="RefSeq" id="NP_001077164.1">
    <property type="nucleotide sequence ID" value="NM_001083695.2"/>
</dbReference>
<dbReference type="SMR" id="A2VE04"/>
<dbReference type="FunCoup" id="A2VE04">
    <property type="interactions" value="163"/>
</dbReference>
<dbReference type="STRING" id="9913.ENSBTAP00000004475"/>
<dbReference type="GlyCosmos" id="A2VE04">
    <property type="glycosylation" value="5 sites, No reported glycans"/>
</dbReference>
<dbReference type="GlyGen" id="A2VE04">
    <property type="glycosylation" value="5 sites"/>
</dbReference>
<dbReference type="PaxDb" id="9913-ENSBTAP00000004475"/>
<dbReference type="GeneID" id="516522"/>
<dbReference type="KEGG" id="bta:516522"/>
<dbReference type="CTD" id="391059"/>
<dbReference type="eggNOG" id="KOG4293">
    <property type="taxonomic scope" value="Eukaryota"/>
</dbReference>
<dbReference type="HOGENOM" id="CLU_028305_2_1_1"/>
<dbReference type="InParanoid" id="A2VE04"/>
<dbReference type="OrthoDB" id="6372137at2759"/>
<dbReference type="Proteomes" id="UP000009136">
    <property type="component" value="Unplaced"/>
</dbReference>
<dbReference type="GO" id="GO:0016020">
    <property type="term" value="C:membrane"/>
    <property type="evidence" value="ECO:0000318"/>
    <property type="project" value="GO_Central"/>
</dbReference>
<dbReference type="GO" id="GO:0046872">
    <property type="term" value="F:metal ion binding"/>
    <property type="evidence" value="ECO:0007669"/>
    <property type="project" value="UniProtKB-KW"/>
</dbReference>
<dbReference type="GO" id="GO:0016722">
    <property type="term" value="F:oxidoreductase activity, acting on metal ions"/>
    <property type="evidence" value="ECO:0000318"/>
    <property type="project" value="GO_Central"/>
</dbReference>
<dbReference type="GO" id="GO:0006879">
    <property type="term" value="P:intracellular iron ion homeostasis"/>
    <property type="evidence" value="ECO:0000318"/>
    <property type="project" value="GO_Central"/>
</dbReference>
<dbReference type="CDD" id="cd08760">
    <property type="entry name" value="Cyt_b561_FRRS1_like"/>
    <property type="match status" value="1"/>
</dbReference>
<dbReference type="CDD" id="cd09628">
    <property type="entry name" value="DOMON_SDR_2_like"/>
    <property type="match status" value="1"/>
</dbReference>
<dbReference type="CDD" id="cd08544">
    <property type="entry name" value="Reeler"/>
    <property type="match status" value="1"/>
</dbReference>
<dbReference type="FunFam" id="2.60.40.4060:FF:000003">
    <property type="entry name" value="Ferric chelate reductase 1"/>
    <property type="match status" value="1"/>
</dbReference>
<dbReference type="Gene3D" id="1.20.120.1770">
    <property type="match status" value="1"/>
</dbReference>
<dbReference type="Gene3D" id="2.60.40.4060">
    <property type="entry name" value="Reeler domain"/>
    <property type="match status" value="1"/>
</dbReference>
<dbReference type="InterPro" id="IPR006593">
    <property type="entry name" value="Cyt_b561/ferric_Rdtase_TM"/>
</dbReference>
<dbReference type="InterPro" id="IPR005018">
    <property type="entry name" value="DOMON_domain"/>
</dbReference>
<dbReference type="InterPro" id="IPR051237">
    <property type="entry name" value="Ferric-chelate_Red/DefProt"/>
</dbReference>
<dbReference type="InterPro" id="IPR002861">
    <property type="entry name" value="Reeler_dom"/>
</dbReference>
<dbReference type="InterPro" id="IPR042307">
    <property type="entry name" value="Reeler_sf"/>
</dbReference>
<dbReference type="PANTHER" id="PTHR45828">
    <property type="entry name" value="CYTOCHROME B561/FERRIC REDUCTASE TRANSMEMBRANE"/>
    <property type="match status" value="1"/>
</dbReference>
<dbReference type="PANTHER" id="PTHR45828:SF3">
    <property type="entry name" value="FERRIC-CHELATE REDUCTASE 1"/>
    <property type="match status" value="1"/>
</dbReference>
<dbReference type="Pfam" id="PF03351">
    <property type="entry name" value="DOMON"/>
    <property type="match status" value="1"/>
</dbReference>
<dbReference type="Pfam" id="PF02014">
    <property type="entry name" value="Reeler"/>
    <property type="match status" value="1"/>
</dbReference>
<dbReference type="SMART" id="SM00665">
    <property type="entry name" value="B561"/>
    <property type="match status" value="1"/>
</dbReference>
<dbReference type="SMART" id="SM00664">
    <property type="entry name" value="DoH"/>
    <property type="match status" value="1"/>
</dbReference>
<dbReference type="PROSITE" id="PS50939">
    <property type="entry name" value="CYTOCHROME_B561"/>
    <property type="match status" value="1"/>
</dbReference>
<dbReference type="PROSITE" id="PS50836">
    <property type="entry name" value="DOMON"/>
    <property type="match status" value="1"/>
</dbReference>
<dbReference type="PROSITE" id="PS51019">
    <property type="entry name" value="REELIN"/>
    <property type="match status" value="1"/>
</dbReference>
<comment type="function">
    <text evidence="2">Ferric-chelate reductases reduce Fe(3+) to Fe(2+) before its transport from the endosome to the cytoplasm.</text>
</comment>
<comment type="cofactor">
    <cofactor evidence="1">
        <name>heme b</name>
        <dbReference type="ChEBI" id="CHEBI:60344"/>
    </cofactor>
    <text evidence="1">Binds 2 heme b groups non-covalently.</text>
</comment>
<comment type="subcellular location">
    <subcellularLocation>
        <location evidence="7">Membrane</location>
        <topology evidence="7">Multi-pass membrane protein</topology>
    </subcellularLocation>
</comment>
<comment type="similarity">
    <text evidence="7">Belongs to the FRRS1 family.</text>
</comment>
<accession>A2VE04</accession>